<dbReference type="EMBL" id="EU262891">
    <property type="protein sequence ID" value="ABX10134.1"/>
    <property type="molecule type" value="Genomic_DNA"/>
</dbReference>
<dbReference type="RefSeq" id="YP_001687464.1">
    <property type="nucleotide sequence ID" value="NC_010362.1"/>
</dbReference>
<dbReference type="SMR" id="B0Z5E1"/>
<dbReference type="GeneID" id="5955426"/>
<dbReference type="GO" id="GO:0009535">
    <property type="term" value="C:chloroplast thylakoid membrane"/>
    <property type="evidence" value="ECO:0007669"/>
    <property type="project" value="UniProtKB-SubCell"/>
</dbReference>
<dbReference type="GO" id="GO:0009055">
    <property type="term" value="F:electron transfer activity"/>
    <property type="evidence" value="ECO:0007669"/>
    <property type="project" value="UniProtKB-UniRule"/>
</dbReference>
<dbReference type="GO" id="GO:0020037">
    <property type="term" value="F:heme binding"/>
    <property type="evidence" value="ECO:0007669"/>
    <property type="project" value="InterPro"/>
</dbReference>
<dbReference type="GO" id="GO:0005506">
    <property type="term" value="F:iron ion binding"/>
    <property type="evidence" value="ECO:0007669"/>
    <property type="project" value="InterPro"/>
</dbReference>
<dbReference type="GO" id="GO:0015979">
    <property type="term" value="P:photosynthesis"/>
    <property type="evidence" value="ECO:0007669"/>
    <property type="project" value="UniProtKB-UniRule"/>
</dbReference>
<dbReference type="FunFam" id="1.20.5.700:FF:000001">
    <property type="entry name" value="Cytochrome f"/>
    <property type="match status" value="1"/>
</dbReference>
<dbReference type="FunFam" id="2.40.50.100:FF:000007">
    <property type="entry name" value="Cytochrome f"/>
    <property type="match status" value="1"/>
</dbReference>
<dbReference type="FunFam" id="2.60.40.830:FF:000001">
    <property type="entry name" value="Cytochrome f"/>
    <property type="match status" value="1"/>
</dbReference>
<dbReference type="Gene3D" id="2.40.50.100">
    <property type="match status" value="1"/>
</dbReference>
<dbReference type="Gene3D" id="2.60.40.830">
    <property type="entry name" value="Cytochrome f large domain"/>
    <property type="match status" value="1"/>
</dbReference>
<dbReference type="Gene3D" id="1.20.5.700">
    <property type="entry name" value="Single helix bin"/>
    <property type="match status" value="1"/>
</dbReference>
<dbReference type="HAMAP" id="MF_00610">
    <property type="entry name" value="Cytb6_f_cytF"/>
    <property type="match status" value="1"/>
</dbReference>
<dbReference type="InterPro" id="IPR024058">
    <property type="entry name" value="Cyt-f_TM"/>
</dbReference>
<dbReference type="InterPro" id="IPR002325">
    <property type="entry name" value="Cyt_f"/>
</dbReference>
<dbReference type="InterPro" id="IPR024094">
    <property type="entry name" value="Cyt_f_lg_dom"/>
</dbReference>
<dbReference type="InterPro" id="IPR036826">
    <property type="entry name" value="Cyt_f_lg_dom_sf"/>
</dbReference>
<dbReference type="InterPro" id="IPR011054">
    <property type="entry name" value="Rudment_hybrid_motif"/>
</dbReference>
<dbReference type="PANTHER" id="PTHR33288">
    <property type="match status" value="1"/>
</dbReference>
<dbReference type="PANTHER" id="PTHR33288:SF10">
    <property type="entry name" value="CYTOCHROME F"/>
    <property type="match status" value="1"/>
</dbReference>
<dbReference type="Pfam" id="PF01333">
    <property type="entry name" value="Apocytochr_F_C"/>
    <property type="match status" value="1"/>
</dbReference>
<dbReference type="Pfam" id="PF16639">
    <property type="entry name" value="Apocytochr_F_N"/>
    <property type="match status" value="1"/>
</dbReference>
<dbReference type="PRINTS" id="PR00610">
    <property type="entry name" value="CYTOCHROMEF"/>
</dbReference>
<dbReference type="SUPFAM" id="SSF103431">
    <property type="entry name" value="Cytochrome f subunit of the cytochrome b6f complex, transmembrane anchor"/>
    <property type="match status" value="1"/>
</dbReference>
<dbReference type="SUPFAM" id="SSF49441">
    <property type="entry name" value="Cytochrome f, large domain"/>
    <property type="match status" value="1"/>
</dbReference>
<dbReference type="SUPFAM" id="SSF51246">
    <property type="entry name" value="Rudiment single hybrid motif"/>
    <property type="match status" value="1"/>
</dbReference>
<dbReference type="PROSITE" id="PS51010">
    <property type="entry name" value="CYTF"/>
    <property type="match status" value="1"/>
</dbReference>
<organism>
    <name type="scientific">Oenothera parviflora</name>
    <name type="common">Small-flowered evening primrose</name>
    <name type="synonym">Oenothera cruciata</name>
    <dbReference type="NCBI Taxonomy" id="482429"/>
    <lineage>
        <taxon>Eukaryota</taxon>
        <taxon>Viridiplantae</taxon>
        <taxon>Streptophyta</taxon>
        <taxon>Embryophyta</taxon>
        <taxon>Tracheophyta</taxon>
        <taxon>Spermatophyta</taxon>
        <taxon>Magnoliopsida</taxon>
        <taxon>eudicotyledons</taxon>
        <taxon>Gunneridae</taxon>
        <taxon>Pentapetalae</taxon>
        <taxon>rosids</taxon>
        <taxon>malvids</taxon>
        <taxon>Myrtales</taxon>
        <taxon>Onagraceae</taxon>
        <taxon>Onagroideae</taxon>
        <taxon>Onagreae</taxon>
        <taxon>Oenothera</taxon>
    </lineage>
</organism>
<reference key="1">
    <citation type="journal article" date="2008" name="Nucleic Acids Res.">
        <title>The complete nucleotide sequences of the five genetically distinct plastid genomes of Oenothera, subsection Oenothera: I. Sequence evaluation and plastome evolution.</title>
        <authorList>
            <person name="Greiner S."/>
            <person name="Wang X."/>
            <person name="Rauwolf U."/>
            <person name="Silber M.V."/>
            <person name="Mayer K."/>
            <person name="Meurer J."/>
            <person name="Haberer G."/>
            <person name="Herrmann R.G."/>
        </authorList>
    </citation>
    <scope>NUCLEOTIDE SEQUENCE [LARGE SCALE GENOMIC DNA]</scope>
    <source>
        <strain>cv. Atrovirens</strain>
    </source>
</reference>
<name>CYF_OENPA</name>
<protein>
    <recommendedName>
        <fullName evidence="2">Cytochrome f</fullName>
    </recommendedName>
</protein>
<sequence>MKNTFSWIKKEITRSISLSLMIYIITRTSISNAYPIFAQQGYENPREATGRIVCANCHLANKPVDIEVPQAVLPDTVFEAVVRIPYDRQVKQVLANGKKGGLNVGAVLILPEGFELAPPARISPEMKERIGNPSFQSYRPTKKNILVIGPVPGQKYSEITFPILSPDPATNKDVHFLKYPIYVGGNRGRGQIYPDGSKSNNTVYNATAAGIVSKIIRKEKGGYEITITDASDGRQVVDIIPSGPELLVSEGESIKLDQPLTSNPNVGGFGQGDAEVVLQDPLRVQGLLFFLASVILAQIFLVLKKKQFEKVQLSEMNF</sequence>
<gene>
    <name evidence="2" type="primary">petA</name>
</gene>
<proteinExistence type="inferred from homology"/>
<accession>B0Z5E1</accession>
<evidence type="ECO:0000250" key="1"/>
<evidence type="ECO:0000255" key="2">
    <source>
        <dbReference type="HAMAP-Rule" id="MF_00610"/>
    </source>
</evidence>
<geneLocation type="chloroplast"/>
<keyword id="KW-0150">Chloroplast</keyword>
<keyword id="KW-0249">Electron transport</keyword>
<keyword id="KW-0349">Heme</keyword>
<keyword id="KW-0408">Iron</keyword>
<keyword id="KW-0472">Membrane</keyword>
<keyword id="KW-0479">Metal-binding</keyword>
<keyword id="KW-0602">Photosynthesis</keyword>
<keyword id="KW-0934">Plastid</keyword>
<keyword id="KW-0732">Signal</keyword>
<keyword id="KW-0793">Thylakoid</keyword>
<keyword id="KW-0812">Transmembrane</keyword>
<keyword id="KW-1133">Transmembrane helix</keyword>
<keyword id="KW-0813">Transport</keyword>
<feature type="signal peptide" evidence="2">
    <location>
        <begin position="1"/>
        <end position="33"/>
    </location>
</feature>
<feature type="chain" id="PRO_0000342078" description="Cytochrome f">
    <location>
        <begin position="34"/>
        <end position="318"/>
    </location>
</feature>
<feature type="transmembrane region" description="Helical" evidence="2">
    <location>
        <begin position="284"/>
        <end position="304"/>
    </location>
</feature>
<feature type="binding site" description="axial binding residue" evidence="2">
    <location>
        <position position="34"/>
    </location>
    <ligand>
        <name>heme</name>
        <dbReference type="ChEBI" id="CHEBI:30413"/>
    </ligand>
    <ligandPart>
        <name>Fe</name>
        <dbReference type="ChEBI" id="CHEBI:18248"/>
    </ligandPart>
</feature>
<feature type="binding site" description="covalent" evidence="2">
    <location>
        <position position="54"/>
    </location>
    <ligand>
        <name>heme</name>
        <dbReference type="ChEBI" id="CHEBI:30413"/>
    </ligand>
</feature>
<feature type="binding site" description="covalent" evidence="2">
    <location>
        <position position="57"/>
    </location>
    <ligand>
        <name>heme</name>
        <dbReference type="ChEBI" id="CHEBI:30413"/>
    </ligand>
</feature>
<feature type="binding site" description="axial binding residue" evidence="2">
    <location>
        <position position="58"/>
    </location>
    <ligand>
        <name>heme</name>
        <dbReference type="ChEBI" id="CHEBI:30413"/>
    </ligand>
    <ligandPart>
        <name>Fe</name>
        <dbReference type="ChEBI" id="CHEBI:18248"/>
    </ligandPart>
</feature>
<comment type="function">
    <text evidence="2">Component of the cytochrome b6-f complex, which mediates electron transfer between photosystem II (PSII) and photosystem I (PSI), cyclic electron flow around PSI, and state transitions.</text>
</comment>
<comment type="cofactor">
    <cofactor evidence="2">
        <name>heme</name>
        <dbReference type="ChEBI" id="CHEBI:30413"/>
    </cofactor>
    <text evidence="2">Binds 1 heme group covalently.</text>
</comment>
<comment type="subunit">
    <text evidence="1">The 4 large subunits of the cytochrome b6-f complex are cytochrome b6, subunit IV (17 kDa polypeptide, petD), cytochrome f and the Rieske protein, while the 4 small subunits are PetG, PetL, PetM and PetN. The complex functions as a dimer (By similarity).</text>
</comment>
<comment type="subcellular location">
    <subcellularLocation>
        <location evidence="2">Plastid</location>
        <location evidence="2">Chloroplast thylakoid membrane</location>
        <topology evidence="2">Single-pass membrane protein</topology>
    </subcellularLocation>
</comment>
<comment type="similarity">
    <text evidence="2">Belongs to the cytochrome f family.</text>
</comment>